<comment type="function">
    <text evidence="9">Degrades abnormal exported proteins and responsible for the propeptide processing of a natural pro-protein and for the maturation of a native protein. It also plays a prominent role in stress (heat shock, ethanol, puromycin and NaCl) resistance during active exponential growth (Probable).</text>
</comment>
<comment type="catalytic activity">
    <reaction>
        <text>Acts on substrates that are at least partially unfolded. The cleavage site P1 residue is normally between a pair of hydrophobic residues, such as Val-|-Val.</text>
        <dbReference type="EC" id="3.4.21.107"/>
    </reaction>
</comment>
<comment type="subcellular location">
    <subcellularLocation>
        <location evidence="8">Cell membrane</location>
        <topology evidence="8">Single-pass membrane protein</topology>
    </subcellularLocation>
</comment>
<comment type="induction">
    <text evidence="5 6 7">Transcription is CssS dependent. Induced by heat shock during exponential growth and by heterologous amylases at the transition phase of the growth cycle. Negatively regulates its own expression during exponential growth and during heat shock.</text>
</comment>
<comment type="disruption phenotype">
    <text evidence="6">In contrast to other bacteria, in which inactivation of serine protease leads to thermosensitivity, inactivation of HtrA leads to an increased thermotolerance and an increased tolerance to hydrogen peroxide. Inactivation of both HtrA and HtrB leads to growth defects and to thermosensitivity.</text>
</comment>
<comment type="miscellaneous">
    <text>Inactivation results in compensating overexpression of YtvA, especially during stress conditions.</text>
</comment>
<comment type="similarity">
    <text evidence="8">Belongs to the peptidase S1C family.</text>
</comment>
<reference key="1">
    <citation type="submission" date="1997-11" db="EMBL/GenBank/DDBJ databases">
        <title>Sequence of the Bacillus subtilis genome between xlyA and ykoR.</title>
        <authorList>
            <person name="Devine K.M."/>
        </authorList>
    </citation>
    <scope>NUCLEOTIDE SEQUENCE [GENOMIC DNA]</scope>
    <source>
        <strain>168</strain>
    </source>
</reference>
<reference key="2">
    <citation type="journal article" date="1997" name="Nature">
        <title>The complete genome sequence of the Gram-positive bacterium Bacillus subtilis.</title>
        <authorList>
            <person name="Kunst F."/>
            <person name="Ogasawara N."/>
            <person name="Moszer I."/>
            <person name="Albertini A.M."/>
            <person name="Alloni G."/>
            <person name="Azevedo V."/>
            <person name="Bertero M.G."/>
            <person name="Bessieres P."/>
            <person name="Bolotin A."/>
            <person name="Borchert S."/>
            <person name="Borriss R."/>
            <person name="Boursier L."/>
            <person name="Brans A."/>
            <person name="Braun M."/>
            <person name="Brignell S.C."/>
            <person name="Bron S."/>
            <person name="Brouillet S."/>
            <person name="Bruschi C.V."/>
            <person name="Caldwell B."/>
            <person name="Capuano V."/>
            <person name="Carter N.M."/>
            <person name="Choi S.-K."/>
            <person name="Codani J.-J."/>
            <person name="Connerton I.F."/>
            <person name="Cummings N.J."/>
            <person name="Daniel R.A."/>
            <person name="Denizot F."/>
            <person name="Devine K.M."/>
            <person name="Duesterhoeft A."/>
            <person name="Ehrlich S.D."/>
            <person name="Emmerson P.T."/>
            <person name="Entian K.-D."/>
            <person name="Errington J."/>
            <person name="Fabret C."/>
            <person name="Ferrari E."/>
            <person name="Foulger D."/>
            <person name="Fritz C."/>
            <person name="Fujita M."/>
            <person name="Fujita Y."/>
            <person name="Fuma S."/>
            <person name="Galizzi A."/>
            <person name="Galleron N."/>
            <person name="Ghim S.-Y."/>
            <person name="Glaser P."/>
            <person name="Goffeau A."/>
            <person name="Golightly E.J."/>
            <person name="Grandi G."/>
            <person name="Guiseppi G."/>
            <person name="Guy B.J."/>
            <person name="Haga K."/>
            <person name="Haiech J."/>
            <person name="Harwood C.R."/>
            <person name="Henaut A."/>
            <person name="Hilbert H."/>
            <person name="Holsappel S."/>
            <person name="Hosono S."/>
            <person name="Hullo M.-F."/>
            <person name="Itaya M."/>
            <person name="Jones L.-M."/>
            <person name="Joris B."/>
            <person name="Karamata D."/>
            <person name="Kasahara Y."/>
            <person name="Klaerr-Blanchard M."/>
            <person name="Klein C."/>
            <person name="Kobayashi Y."/>
            <person name="Koetter P."/>
            <person name="Koningstein G."/>
            <person name="Krogh S."/>
            <person name="Kumano M."/>
            <person name="Kurita K."/>
            <person name="Lapidus A."/>
            <person name="Lardinois S."/>
            <person name="Lauber J."/>
            <person name="Lazarevic V."/>
            <person name="Lee S.-M."/>
            <person name="Levine A."/>
            <person name="Liu H."/>
            <person name="Masuda S."/>
            <person name="Mauel C."/>
            <person name="Medigue C."/>
            <person name="Medina N."/>
            <person name="Mellado R.P."/>
            <person name="Mizuno M."/>
            <person name="Moestl D."/>
            <person name="Nakai S."/>
            <person name="Noback M."/>
            <person name="Noone D."/>
            <person name="O'Reilly M."/>
            <person name="Ogawa K."/>
            <person name="Ogiwara A."/>
            <person name="Oudega B."/>
            <person name="Park S.-H."/>
            <person name="Parro V."/>
            <person name="Pohl T.M."/>
            <person name="Portetelle D."/>
            <person name="Porwollik S."/>
            <person name="Prescott A.M."/>
            <person name="Presecan E."/>
            <person name="Pujic P."/>
            <person name="Purnelle B."/>
            <person name="Rapoport G."/>
            <person name="Rey M."/>
            <person name="Reynolds S."/>
            <person name="Rieger M."/>
            <person name="Rivolta C."/>
            <person name="Rocha E."/>
            <person name="Roche B."/>
            <person name="Rose M."/>
            <person name="Sadaie Y."/>
            <person name="Sato T."/>
            <person name="Scanlan E."/>
            <person name="Schleich S."/>
            <person name="Schroeter R."/>
            <person name="Scoffone F."/>
            <person name="Sekiguchi J."/>
            <person name="Sekowska A."/>
            <person name="Seror S.J."/>
            <person name="Serror P."/>
            <person name="Shin B.-S."/>
            <person name="Soldo B."/>
            <person name="Sorokin A."/>
            <person name="Tacconi E."/>
            <person name="Takagi T."/>
            <person name="Takahashi H."/>
            <person name="Takemaru K."/>
            <person name="Takeuchi M."/>
            <person name="Tamakoshi A."/>
            <person name="Tanaka T."/>
            <person name="Terpstra P."/>
            <person name="Tognoni A."/>
            <person name="Tosato V."/>
            <person name="Uchiyama S."/>
            <person name="Vandenbol M."/>
            <person name="Vannier F."/>
            <person name="Vassarotti A."/>
            <person name="Viari A."/>
            <person name="Wambutt R."/>
            <person name="Wedler E."/>
            <person name="Wedler H."/>
            <person name="Weitzenegger T."/>
            <person name="Winters P."/>
            <person name="Wipat A."/>
            <person name="Yamamoto H."/>
            <person name="Yamane K."/>
            <person name="Yasumoto K."/>
            <person name="Yata K."/>
            <person name="Yoshida K."/>
            <person name="Yoshikawa H.-F."/>
            <person name="Zumstein E."/>
            <person name="Yoshikawa H."/>
            <person name="Danchin A."/>
        </authorList>
    </citation>
    <scope>NUCLEOTIDE SEQUENCE [LARGE SCALE GENOMIC DNA]</scope>
    <source>
        <strain>168</strain>
    </source>
</reference>
<reference key="3">
    <citation type="journal article" date="2009" name="Microbiology">
        <title>From a consortium sequence to a unified sequence: the Bacillus subtilis 168 reference genome a decade later.</title>
        <authorList>
            <person name="Barbe V."/>
            <person name="Cruveiller S."/>
            <person name="Kunst F."/>
            <person name="Lenoble P."/>
            <person name="Meurice G."/>
            <person name="Sekowska A."/>
            <person name="Vallenet D."/>
            <person name="Wang T."/>
            <person name="Moszer I."/>
            <person name="Medigue C."/>
            <person name="Danchin A."/>
        </authorList>
    </citation>
    <scope>SEQUENCE REVISION TO 72</scope>
</reference>
<reference key="4">
    <citation type="journal article" date="2000" name="J. Bacteriol.">
        <title>Expression of ykdA, encoding a Bacillus subtilis homologue of HtrA, is heat shock inducible and negatively autoregulated.</title>
        <authorList>
            <person name="Noone D."/>
            <person name="Howell A."/>
            <person name="Devine K.M."/>
        </authorList>
    </citation>
    <scope>INDUCTION</scope>
    <source>
        <strain>168</strain>
    </source>
</reference>
<reference key="5">
    <citation type="journal article" date="2001" name="J. Bacteriol.">
        <title>YkdA and YvtA, HtrA-like serine proteases in Bacillus subtilis, engage in negative autoregulation and reciprocal cross-regulation of ykdA and yvtA gene expression.</title>
        <authorList>
            <person name="Noone D."/>
            <person name="Howell A."/>
            <person name="Collery R."/>
            <person name="Devine K.M."/>
        </authorList>
    </citation>
    <scope>INDUCTION</scope>
    <scope>DISRUPTION PHENOTYPE</scope>
    <scope>FUNCTION</scope>
    <source>
        <strain>168</strain>
    </source>
</reference>
<reference key="6">
    <citation type="journal article" date="2001" name="Mol. Microbiol.">
        <title>A novel two-component regulatory system in Bacillus subtilis for the survival of severe secretion stress.</title>
        <authorList>
            <person name="Hyyrylaeinen H.-L."/>
            <person name="Bolhuis A."/>
            <person name="Darmon E."/>
            <person name="Muukkonen L."/>
            <person name="Koski P."/>
            <person name="Vitikainen M."/>
            <person name="Sarvas M."/>
            <person name="Pragai Z."/>
            <person name="Bron S."/>
            <person name="van Dijl J.M."/>
            <person name="Kontinen V.P."/>
        </authorList>
    </citation>
    <scope>INDUCTION</scope>
    <source>
        <strain>168</strain>
    </source>
</reference>
<accession>O34358</accession>
<evidence type="ECO:0000250" key="1"/>
<evidence type="ECO:0000255" key="2"/>
<evidence type="ECO:0000255" key="3">
    <source>
        <dbReference type="PROSITE-ProRule" id="PRU00143"/>
    </source>
</evidence>
<evidence type="ECO:0000256" key="4">
    <source>
        <dbReference type="SAM" id="MobiDB-lite"/>
    </source>
</evidence>
<evidence type="ECO:0000269" key="5">
    <source>
    </source>
</evidence>
<evidence type="ECO:0000269" key="6">
    <source>
    </source>
</evidence>
<evidence type="ECO:0000269" key="7">
    <source>
    </source>
</evidence>
<evidence type="ECO:0000305" key="8"/>
<evidence type="ECO:0000305" key="9">
    <source>
    </source>
</evidence>
<protein>
    <recommendedName>
        <fullName>Serine protease Do-like HtrA</fullName>
        <ecNumber>3.4.21.107</ecNumber>
    </recommendedName>
    <alternativeName>
        <fullName>HtrA-like serine protease</fullName>
    </alternativeName>
</protein>
<feature type="chain" id="PRO_0000093859" description="Serine protease Do-like HtrA">
    <location>
        <begin position="1"/>
        <end position="449"/>
    </location>
</feature>
<feature type="topological domain" description="Cytoplasmic" evidence="2">
    <location>
        <begin position="1"/>
        <end position="44"/>
    </location>
</feature>
<feature type="transmembrane region" description="Helical" evidence="2">
    <location>
        <begin position="45"/>
        <end position="67"/>
    </location>
</feature>
<feature type="topological domain" description="Extracellular" evidence="2">
    <location>
        <begin position="68"/>
        <end position="449"/>
    </location>
</feature>
<feature type="domain" description="PDZ" evidence="3">
    <location>
        <begin position="348"/>
        <end position="437"/>
    </location>
</feature>
<feature type="region of interest" description="Disordered" evidence="4">
    <location>
        <begin position="1"/>
        <end position="35"/>
    </location>
</feature>
<feature type="region of interest" description="Disordered" evidence="4">
    <location>
        <begin position="73"/>
        <end position="116"/>
    </location>
</feature>
<feature type="region of interest" description="Disordered" evidence="4">
    <location>
        <begin position="140"/>
        <end position="163"/>
    </location>
</feature>
<feature type="compositionally biased region" description="Basic and acidic residues" evidence="4">
    <location>
        <begin position="1"/>
        <end position="24"/>
    </location>
</feature>
<feature type="compositionally biased region" description="Low complexity" evidence="4">
    <location>
        <begin position="78"/>
        <end position="110"/>
    </location>
</feature>
<feature type="compositionally biased region" description="Low complexity" evidence="4">
    <location>
        <begin position="140"/>
        <end position="150"/>
    </location>
</feature>
<feature type="active site" description="Charge relay system" evidence="2">
    <location>
        <position position="179"/>
    </location>
</feature>
<feature type="active site" description="Charge relay system" evidence="2">
    <location>
        <position position="209"/>
    </location>
</feature>
<feature type="active site" description="Charge relay system" evidence="2">
    <location>
        <position position="290"/>
    </location>
</feature>
<feature type="binding site" evidence="1">
    <location>
        <begin position="288"/>
        <end position="290"/>
    </location>
    <ligand>
        <name>substrate</name>
    </ligand>
</feature>
<feature type="binding site" evidence="1">
    <location>
        <begin position="344"/>
        <end position="348"/>
    </location>
    <ligand>
        <name>substrate</name>
    </ligand>
</feature>
<feature type="sequence conflict" description="In Ref. 1; CAA05570." evidence="8" ref="1">
    <original>D</original>
    <variation>N</variation>
    <location>
        <position position="72"/>
    </location>
</feature>
<keyword id="KW-1003">Cell membrane</keyword>
<keyword id="KW-0378">Hydrolase</keyword>
<keyword id="KW-0472">Membrane</keyword>
<keyword id="KW-0645">Protease</keyword>
<keyword id="KW-1185">Reference proteome</keyword>
<keyword id="KW-0720">Serine protease</keyword>
<keyword id="KW-0346">Stress response</keyword>
<keyword id="KW-0812">Transmembrane</keyword>
<keyword id="KW-1133">Transmembrane helix</keyword>
<sequence length="449" mass="47715">MDNYRDENRTKGNENEVFLTKENDQSASYSARNVIHDQEKKKRGFGWFRPLLGGVIGGSLALGIYTFTPLGDHDSQDTAKQSSSQQQTQSVTATSTSSESKKSSSSSSAFKSEDSSKISDMVEDLSPAIVGITNLQAQSNSSLFGSSSSDSSEDTESGSGSGVIFKKENGKAYIITNNHVVEGASSLKVSLYDGTEVTAKLVGSDSLTDLAVLQISDDHVTKVANFGDSSDLRTGETVIAIGDPLGKDLSRTVTQGIVSGVDRTVSMSTSAGETSINVIQTDAAINPGNSGGPLLNTDGKIVGINSMKISEDDVEGIGFAIPSNDVKPIAEELLSKGQIERPYIGVSMLDLEQVPQNYQEGTLGLFGSQLNKGVYIREVASGSPAEKAGLKAEDIIIGLKGKEIDTGSELRNILYKDAKIGDTVEVKILRNGKEMTKKIKLDQKEEKTS</sequence>
<gene>
    <name type="primary">htrA</name>
    <name type="synonym">ykdA</name>
    <name type="ordered locus">BSU12900</name>
</gene>
<organism>
    <name type="scientific">Bacillus subtilis (strain 168)</name>
    <dbReference type="NCBI Taxonomy" id="224308"/>
    <lineage>
        <taxon>Bacteria</taxon>
        <taxon>Bacillati</taxon>
        <taxon>Bacillota</taxon>
        <taxon>Bacilli</taxon>
        <taxon>Bacillales</taxon>
        <taxon>Bacillaceae</taxon>
        <taxon>Bacillus</taxon>
    </lineage>
</organism>
<name>HTRA_BACSU</name>
<proteinExistence type="evidence at transcript level"/>
<dbReference type="EC" id="3.4.21.107"/>
<dbReference type="EMBL" id="AJ002571">
    <property type="protein sequence ID" value="CAA05570.1"/>
    <property type="molecule type" value="Genomic_DNA"/>
</dbReference>
<dbReference type="EMBL" id="AL009126">
    <property type="protein sequence ID" value="CAB13147.2"/>
    <property type="molecule type" value="Genomic_DNA"/>
</dbReference>
<dbReference type="PIR" id="A69643">
    <property type="entry name" value="A69643"/>
</dbReference>
<dbReference type="RefSeq" id="NP_389173.2">
    <property type="nucleotide sequence ID" value="NC_000964.3"/>
</dbReference>
<dbReference type="RefSeq" id="WP_009967069.1">
    <property type="nucleotide sequence ID" value="NZ_OZ025638.1"/>
</dbReference>
<dbReference type="SMR" id="O34358"/>
<dbReference type="FunCoup" id="O34358">
    <property type="interactions" value="614"/>
</dbReference>
<dbReference type="IntAct" id="O34358">
    <property type="interactions" value="3"/>
</dbReference>
<dbReference type="STRING" id="224308.BSU12900"/>
<dbReference type="MEROPS" id="S01.B81"/>
<dbReference type="PaxDb" id="224308-BSU12900"/>
<dbReference type="EnsemblBacteria" id="CAB13147">
    <property type="protein sequence ID" value="CAB13147"/>
    <property type="gene ID" value="BSU_12900"/>
</dbReference>
<dbReference type="GeneID" id="939849"/>
<dbReference type="KEGG" id="bsu:BSU12900"/>
<dbReference type="PATRIC" id="fig|224308.179.peg.1402"/>
<dbReference type="eggNOG" id="COG0265">
    <property type="taxonomic scope" value="Bacteria"/>
</dbReference>
<dbReference type="InParanoid" id="O34358"/>
<dbReference type="OrthoDB" id="9758917at2"/>
<dbReference type="PhylomeDB" id="O34358"/>
<dbReference type="BioCyc" id="BSUB:BSU12900-MONOMER"/>
<dbReference type="Proteomes" id="UP000001570">
    <property type="component" value="Chromosome"/>
</dbReference>
<dbReference type="GO" id="GO:0005886">
    <property type="term" value="C:plasma membrane"/>
    <property type="evidence" value="ECO:0007669"/>
    <property type="project" value="UniProtKB-SubCell"/>
</dbReference>
<dbReference type="GO" id="GO:0004252">
    <property type="term" value="F:serine-type endopeptidase activity"/>
    <property type="evidence" value="ECO:0007669"/>
    <property type="project" value="InterPro"/>
</dbReference>
<dbReference type="GO" id="GO:0006508">
    <property type="term" value="P:proteolysis"/>
    <property type="evidence" value="ECO:0007669"/>
    <property type="project" value="UniProtKB-KW"/>
</dbReference>
<dbReference type="CDD" id="cd06781">
    <property type="entry name" value="cpPDZ_BsHtra-like"/>
    <property type="match status" value="1"/>
</dbReference>
<dbReference type="Gene3D" id="2.30.42.10">
    <property type="match status" value="1"/>
</dbReference>
<dbReference type="Gene3D" id="2.40.10.10">
    <property type="entry name" value="Trypsin-like serine proteases"/>
    <property type="match status" value="2"/>
</dbReference>
<dbReference type="InterPro" id="IPR051201">
    <property type="entry name" value="Chloro_Bact_Ser_Proteases"/>
</dbReference>
<dbReference type="InterPro" id="IPR001478">
    <property type="entry name" value="PDZ"/>
</dbReference>
<dbReference type="InterPro" id="IPR036034">
    <property type="entry name" value="PDZ_sf"/>
</dbReference>
<dbReference type="InterPro" id="IPR009003">
    <property type="entry name" value="Peptidase_S1_PA"/>
</dbReference>
<dbReference type="InterPro" id="IPR043504">
    <property type="entry name" value="Peptidase_S1_PA_chymotrypsin"/>
</dbReference>
<dbReference type="InterPro" id="IPR001940">
    <property type="entry name" value="Peptidase_S1C"/>
</dbReference>
<dbReference type="PANTHER" id="PTHR43343">
    <property type="entry name" value="PEPTIDASE S12"/>
    <property type="match status" value="1"/>
</dbReference>
<dbReference type="PANTHER" id="PTHR43343:SF3">
    <property type="entry name" value="PROTEASE DO-LIKE 8, CHLOROPLASTIC"/>
    <property type="match status" value="1"/>
</dbReference>
<dbReference type="Pfam" id="PF13180">
    <property type="entry name" value="PDZ_2"/>
    <property type="match status" value="1"/>
</dbReference>
<dbReference type="Pfam" id="PF13365">
    <property type="entry name" value="Trypsin_2"/>
    <property type="match status" value="1"/>
</dbReference>
<dbReference type="PRINTS" id="PR00834">
    <property type="entry name" value="PROTEASES2C"/>
</dbReference>
<dbReference type="SMART" id="SM00228">
    <property type="entry name" value="PDZ"/>
    <property type="match status" value="1"/>
</dbReference>
<dbReference type="SUPFAM" id="SSF50156">
    <property type="entry name" value="PDZ domain-like"/>
    <property type="match status" value="1"/>
</dbReference>
<dbReference type="SUPFAM" id="SSF50494">
    <property type="entry name" value="Trypsin-like serine proteases"/>
    <property type="match status" value="1"/>
</dbReference>
<dbReference type="PROSITE" id="PS50106">
    <property type="entry name" value="PDZ"/>
    <property type="match status" value="1"/>
</dbReference>